<keyword id="KW-0997">Cell inner membrane</keyword>
<keyword id="KW-1003">Cell membrane</keyword>
<keyword id="KW-0406">Ion transport</keyword>
<keyword id="KW-0472">Membrane</keyword>
<keyword id="KW-0630">Potassium</keyword>
<keyword id="KW-0633">Potassium transport</keyword>
<keyword id="KW-1185">Reference proteome</keyword>
<keyword id="KW-0812">Transmembrane</keyword>
<keyword id="KW-1133">Transmembrane helix</keyword>
<keyword id="KW-0813">Transport</keyword>
<name>KDPA_RALN1</name>
<dbReference type="EMBL" id="AL646052">
    <property type="protein sequence ID" value="CAD16879.1"/>
    <property type="molecule type" value="Genomic_DNA"/>
</dbReference>
<dbReference type="RefSeq" id="WP_011003263.1">
    <property type="nucleotide sequence ID" value="NC_003295.1"/>
</dbReference>
<dbReference type="SMR" id="Q8XU12"/>
<dbReference type="STRING" id="267608.RSc3382"/>
<dbReference type="EnsemblBacteria" id="CAD16879">
    <property type="protein sequence ID" value="CAD16879"/>
    <property type="gene ID" value="RSc3382"/>
</dbReference>
<dbReference type="KEGG" id="rso:RSc3382"/>
<dbReference type="PATRIC" id="fig|267608.8.peg.3434"/>
<dbReference type="eggNOG" id="COG2060">
    <property type="taxonomic scope" value="Bacteria"/>
</dbReference>
<dbReference type="HOGENOM" id="CLU_018614_3_0_4"/>
<dbReference type="Proteomes" id="UP000001436">
    <property type="component" value="Chromosome"/>
</dbReference>
<dbReference type="GO" id="GO:0005886">
    <property type="term" value="C:plasma membrane"/>
    <property type="evidence" value="ECO:0007669"/>
    <property type="project" value="UniProtKB-SubCell"/>
</dbReference>
<dbReference type="GO" id="GO:0008556">
    <property type="term" value="F:P-type potassium transmembrane transporter activity"/>
    <property type="evidence" value="ECO:0007669"/>
    <property type="project" value="InterPro"/>
</dbReference>
<dbReference type="GO" id="GO:0030955">
    <property type="term" value="F:potassium ion binding"/>
    <property type="evidence" value="ECO:0007669"/>
    <property type="project" value="UniProtKB-UniRule"/>
</dbReference>
<dbReference type="HAMAP" id="MF_00275">
    <property type="entry name" value="KdpA"/>
    <property type="match status" value="1"/>
</dbReference>
<dbReference type="InterPro" id="IPR004623">
    <property type="entry name" value="KdpA"/>
</dbReference>
<dbReference type="NCBIfam" id="TIGR00680">
    <property type="entry name" value="kdpA"/>
    <property type="match status" value="1"/>
</dbReference>
<dbReference type="PANTHER" id="PTHR30607">
    <property type="entry name" value="POTASSIUM-TRANSPORTING ATPASE A CHAIN"/>
    <property type="match status" value="1"/>
</dbReference>
<dbReference type="PANTHER" id="PTHR30607:SF2">
    <property type="entry name" value="POTASSIUM-TRANSPORTING ATPASE POTASSIUM-BINDING SUBUNIT"/>
    <property type="match status" value="1"/>
</dbReference>
<dbReference type="Pfam" id="PF03814">
    <property type="entry name" value="KdpA"/>
    <property type="match status" value="1"/>
</dbReference>
<dbReference type="PIRSF" id="PIRSF001294">
    <property type="entry name" value="K_ATPaseA"/>
    <property type="match status" value="1"/>
</dbReference>
<gene>
    <name evidence="1" type="primary">kdpA</name>
    <name type="ordered locus">RSc3382</name>
    <name type="ORF">RS02656</name>
</gene>
<evidence type="ECO:0000255" key="1">
    <source>
        <dbReference type="HAMAP-Rule" id="MF_00275"/>
    </source>
</evidence>
<evidence type="ECO:0000256" key="2">
    <source>
        <dbReference type="SAM" id="MobiDB-lite"/>
    </source>
</evidence>
<organism>
    <name type="scientific">Ralstonia nicotianae (strain ATCC BAA-1114 / GMI1000)</name>
    <name type="common">Ralstonia solanacearum</name>
    <dbReference type="NCBI Taxonomy" id="267608"/>
    <lineage>
        <taxon>Bacteria</taxon>
        <taxon>Pseudomonadati</taxon>
        <taxon>Pseudomonadota</taxon>
        <taxon>Betaproteobacteria</taxon>
        <taxon>Burkholderiales</taxon>
        <taxon>Burkholderiaceae</taxon>
        <taxon>Ralstonia</taxon>
        <taxon>Ralstonia solanacearum species complex</taxon>
    </lineage>
</organism>
<accession>Q8XU12</accession>
<comment type="function">
    <text evidence="1">Part of the high-affinity ATP-driven potassium transport (or Kdp) system, which catalyzes the hydrolysis of ATP coupled with the electrogenic transport of potassium into the cytoplasm. This subunit binds the periplasmic potassium ions and delivers the ions to the membrane domain of KdpB through an intramembrane tunnel.</text>
</comment>
<comment type="subunit">
    <text evidence="1">The system is composed of three essential subunits: KdpA, KdpB and KdpC.</text>
</comment>
<comment type="subcellular location">
    <subcellularLocation>
        <location evidence="1">Cell inner membrane</location>
        <topology evidence="1">Multi-pass membrane protein</topology>
    </subcellularLocation>
</comment>
<comment type="similarity">
    <text evidence="1">Belongs to the KdpA family.</text>
</comment>
<proteinExistence type="inferred from homology"/>
<sequence>MNAFLLQLAIYLAVLLVLARPLGTYMARVFGDAPSRAHWLRSVERLLYRVAGVDPRAEMGWKHYALAVIAVNVLGALAVYALQRLQPWLPLNPQGFGAVTPDSSFNTAVSFVTNTNWQGYSGESTMSYLTQMLGLAVQNFLSAATGIAVVIALIRGFARHSARTIGNFWVDFTRGTLYVLLPLSVIVAVFFVSQGAIQNFDAYKEVTTVAATTYDNPKTDAQGNPIKDAQGNPVTEKATTQKQTLPMGPIASQEAIKMLGTNGGGPFNANSAHPYENPTPLANFVQMLSIFLIPAALCFTFGAMVGDRRQGWAVLASMTILFVVLAVFEMWAELHANPMLAHLGVDQAVGNMEGKETRFGVVASSLFVTITTAASCGAVNAMHDSLTALGGFVPMFLIQLGEVVFGGVGSGLYGMLVYAILAVFIAGLMIGRTPEYLGKKIEVFEMKMTSIAILVTPLLVLVGTAVAVLASGGRAGIFNPGTHGFSEVLYAFSSAANNNGSAFAGLSANTPFYNVALGIVMWLGRFWIIVPVLAMAGTFAAKKRLPVTVGTLPTHGPLFVVLLIGSVLLVGALTYIPALALGPIAEHLAR</sequence>
<protein>
    <recommendedName>
        <fullName evidence="1">Potassium-transporting ATPase potassium-binding subunit</fullName>
    </recommendedName>
    <alternativeName>
        <fullName evidence="1">ATP phosphohydrolase [potassium-transporting] A chain</fullName>
    </alternativeName>
    <alternativeName>
        <fullName evidence="1">Potassium-binding and translocating subunit A</fullName>
    </alternativeName>
    <alternativeName>
        <fullName evidence="1">Potassium-translocating ATPase A chain</fullName>
    </alternativeName>
</protein>
<feature type="chain" id="PRO_0000166516" description="Potassium-transporting ATPase potassium-binding subunit">
    <location>
        <begin position="1"/>
        <end position="590"/>
    </location>
</feature>
<feature type="transmembrane region" description="Helical" evidence="1">
    <location>
        <begin position="3"/>
        <end position="23"/>
    </location>
</feature>
<feature type="transmembrane region" description="Helical" evidence="1">
    <location>
        <begin position="63"/>
        <end position="83"/>
    </location>
</feature>
<feature type="transmembrane region" description="Helical" evidence="1">
    <location>
        <begin position="134"/>
        <end position="154"/>
    </location>
</feature>
<feature type="transmembrane region" description="Helical" evidence="1">
    <location>
        <begin position="177"/>
        <end position="197"/>
    </location>
</feature>
<feature type="transmembrane region" description="Helical" evidence="1">
    <location>
        <begin position="284"/>
        <end position="304"/>
    </location>
</feature>
<feature type="transmembrane region" description="Helical" evidence="1">
    <location>
        <begin position="312"/>
        <end position="332"/>
    </location>
</feature>
<feature type="transmembrane region" description="Helical" evidence="1">
    <location>
        <begin position="359"/>
        <end position="379"/>
    </location>
</feature>
<feature type="transmembrane region" description="Helical" evidence="1">
    <location>
        <begin position="388"/>
        <end position="408"/>
    </location>
</feature>
<feature type="transmembrane region" description="Helical" evidence="1">
    <location>
        <begin position="411"/>
        <end position="431"/>
    </location>
</feature>
<feature type="transmembrane region" description="Helical" evidence="1">
    <location>
        <begin position="450"/>
        <end position="470"/>
    </location>
</feature>
<feature type="transmembrane region" description="Helical" evidence="1">
    <location>
        <begin position="515"/>
        <end position="535"/>
    </location>
</feature>
<feature type="transmembrane region" description="Helical" evidence="1">
    <location>
        <begin position="558"/>
        <end position="578"/>
    </location>
</feature>
<feature type="region of interest" description="Disordered" evidence="2">
    <location>
        <begin position="217"/>
        <end position="244"/>
    </location>
</feature>
<reference key="1">
    <citation type="journal article" date="2002" name="Nature">
        <title>Genome sequence of the plant pathogen Ralstonia solanacearum.</title>
        <authorList>
            <person name="Salanoubat M."/>
            <person name="Genin S."/>
            <person name="Artiguenave F."/>
            <person name="Gouzy J."/>
            <person name="Mangenot S."/>
            <person name="Arlat M."/>
            <person name="Billault A."/>
            <person name="Brottier P."/>
            <person name="Camus J.-C."/>
            <person name="Cattolico L."/>
            <person name="Chandler M."/>
            <person name="Choisne N."/>
            <person name="Claudel-Renard C."/>
            <person name="Cunnac S."/>
            <person name="Demange N."/>
            <person name="Gaspin C."/>
            <person name="Lavie M."/>
            <person name="Moisan A."/>
            <person name="Robert C."/>
            <person name="Saurin W."/>
            <person name="Schiex T."/>
            <person name="Siguier P."/>
            <person name="Thebault P."/>
            <person name="Whalen M."/>
            <person name="Wincker P."/>
            <person name="Levy M."/>
            <person name="Weissenbach J."/>
            <person name="Boucher C.A."/>
        </authorList>
    </citation>
    <scope>NUCLEOTIDE SEQUENCE [LARGE SCALE GENOMIC DNA]</scope>
    <source>
        <strain>ATCC BAA-1114 / GMI1000</strain>
    </source>
</reference>